<proteinExistence type="inferred from homology"/>
<evidence type="ECO:0000250" key="1"/>
<evidence type="ECO:0000305" key="2"/>
<comment type="similarity">
    <text evidence="2">Belongs to the short-chain dehydrogenases/reductases (SDR) family.</text>
</comment>
<protein>
    <recommendedName>
        <fullName>Uncharacterized oxidoreductase MT0502</fullName>
        <ecNumber>1.-.-.-</ecNumber>
    </recommendedName>
</protein>
<feature type="chain" id="PRO_0000428316" description="Uncharacterized oxidoreductase MT0502">
    <location>
        <begin position="1"/>
        <end position="251"/>
    </location>
</feature>
<feature type="active site" description="Proton acceptor" evidence="1">
    <location>
        <position position="149"/>
    </location>
</feature>
<feature type="binding site" evidence="1">
    <location>
        <begin position="12"/>
        <end position="36"/>
    </location>
    <ligand>
        <name>NADP(+)</name>
        <dbReference type="ChEBI" id="CHEBI:58349"/>
    </ligand>
</feature>
<feature type="binding site" evidence="1">
    <location>
        <position position="136"/>
    </location>
    <ligand>
        <name>substrate</name>
    </ligand>
</feature>
<name>Y484_MYCTO</name>
<organism>
    <name type="scientific">Mycobacterium tuberculosis (strain CDC 1551 / Oshkosh)</name>
    <dbReference type="NCBI Taxonomy" id="83331"/>
    <lineage>
        <taxon>Bacteria</taxon>
        <taxon>Bacillati</taxon>
        <taxon>Actinomycetota</taxon>
        <taxon>Actinomycetes</taxon>
        <taxon>Mycobacteriales</taxon>
        <taxon>Mycobacteriaceae</taxon>
        <taxon>Mycobacterium</taxon>
        <taxon>Mycobacterium tuberculosis complex</taxon>
    </lineage>
</organism>
<accession>P9WGR4</accession>
<accession>L0T6M0</accession>
<accession>Q11150</accession>
<sequence>MTTIGTRKRVAVVTGASSGIGEATARTLAAQGFHVVAVARRADRITALANQIGGTAIVADVTDDAAVEALARALSRVDVLVNNAGGAKGLQFVADADLEHWRWMWDTNVLGTLRVTRALLPKLIDSGDGLIVTVTSIAAIEVYDGGAGYTAAKHAQGALHRTLRGELLGKPVRLTEIAPGAVETEFSLVRFDGDQQRADAVYAGMTPLVAADVAEVIGFVATRPSHVNLDQIVIRPRDQASASRRATHPVR</sequence>
<dbReference type="EC" id="1.-.-.-"/>
<dbReference type="EMBL" id="AE000516">
    <property type="protein sequence ID" value="AAK44725.1"/>
    <property type="molecule type" value="Genomic_DNA"/>
</dbReference>
<dbReference type="PIR" id="G70743">
    <property type="entry name" value="G70743"/>
</dbReference>
<dbReference type="RefSeq" id="WP_003900154.1">
    <property type="nucleotide sequence ID" value="NZ_KK341227.1"/>
</dbReference>
<dbReference type="SMR" id="P9WGR4"/>
<dbReference type="KEGG" id="mtc:MT0502"/>
<dbReference type="PATRIC" id="fig|83331.31.peg.532"/>
<dbReference type="HOGENOM" id="CLU_010194_2_10_11"/>
<dbReference type="Proteomes" id="UP000001020">
    <property type="component" value="Chromosome"/>
</dbReference>
<dbReference type="GO" id="GO:0016491">
    <property type="term" value="F:oxidoreductase activity"/>
    <property type="evidence" value="ECO:0007669"/>
    <property type="project" value="UniProtKB-KW"/>
</dbReference>
<dbReference type="FunFam" id="3.40.50.720:FF:000047">
    <property type="entry name" value="NADP-dependent L-serine/L-allo-threonine dehydrogenase"/>
    <property type="match status" value="1"/>
</dbReference>
<dbReference type="Gene3D" id="3.40.50.720">
    <property type="entry name" value="NAD(P)-binding Rossmann-like Domain"/>
    <property type="match status" value="1"/>
</dbReference>
<dbReference type="InterPro" id="IPR036291">
    <property type="entry name" value="NAD(P)-bd_dom_sf"/>
</dbReference>
<dbReference type="InterPro" id="IPR002347">
    <property type="entry name" value="SDR_fam"/>
</dbReference>
<dbReference type="PANTHER" id="PTHR42901">
    <property type="entry name" value="ALCOHOL DEHYDROGENASE"/>
    <property type="match status" value="1"/>
</dbReference>
<dbReference type="PANTHER" id="PTHR42901:SF1">
    <property type="entry name" value="ALCOHOL DEHYDROGENASE"/>
    <property type="match status" value="1"/>
</dbReference>
<dbReference type="Pfam" id="PF00106">
    <property type="entry name" value="adh_short"/>
    <property type="match status" value="1"/>
</dbReference>
<dbReference type="PRINTS" id="PR00081">
    <property type="entry name" value="GDHRDH"/>
</dbReference>
<dbReference type="PRINTS" id="PR00080">
    <property type="entry name" value="SDRFAMILY"/>
</dbReference>
<dbReference type="SUPFAM" id="SSF51735">
    <property type="entry name" value="NAD(P)-binding Rossmann-fold domains"/>
    <property type="match status" value="1"/>
</dbReference>
<reference key="1">
    <citation type="journal article" date="2002" name="J. Bacteriol.">
        <title>Whole-genome comparison of Mycobacterium tuberculosis clinical and laboratory strains.</title>
        <authorList>
            <person name="Fleischmann R.D."/>
            <person name="Alland D."/>
            <person name="Eisen J.A."/>
            <person name="Carpenter L."/>
            <person name="White O."/>
            <person name="Peterson J.D."/>
            <person name="DeBoy R.T."/>
            <person name="Dodson R.J."/>
            <person name="Gwinn M.L."/>
            <person name="Haft D.H."/>
            <person name="Hickey E.K."/>
            <person name="Kolonay J.F."/>
            <person name="Nelson W.C."/>
            <person name="Umayam L.A."/>
            <person name="Ermolaeva M.D."/>
            <person name="Salzberg S.L."/>
            <person name="Delcher A."/>
            <person name="Utterback T.R."/>
            <person name="Weidman J.F."/>
            <person name="Khouri H.M."/>
            <person name="Gill J."/>
            <person name="Mikula A."/>
            <person name="Bishai W."/>
            <person name="Jacobs W.R. Jr."/>
            <person name="Venter J.C."/>
            <person name="Fraser C.M."/>
        </authorList>
    </citation>
    <scope>NUCLEOTIDE SEQUENCE [LARGE SCALE GENOMIC DNA]</scope>
    <source>
        <strain>CDC 1551 / Oshkosh</strain>
    </source>
</reference>
<gene>
    <name type="ordered locus">MT0502</name>
</gene>
<keyword id="KW-0560">Oxidoreductase</keyword>
<keyword id="KW-1185">Reference proteome</keyword>